<name>SYS_MYCSJ</name>
<protein>
    <recommendedName>
        <fullName evidence="1">Serine--tRNA ligase</fullName>
        <ecNumber evidence="1">6.1.1.11</ecNumber>
    </recommendedName>
    <alternativeName>
        <fullName evidence="1">Seryl-tRNA synthetase</fullName>
        <shortName evidence="1">SerRS</shortName>
    </alternativeName>
    <alternativeName>
        <fullName evidence="1">Seryl-tRNA(Ser/Sec) synthetase</fullName>
    </alternativeName>
</protein>
<dbReference type="EC" id="6.1.1.11" evidence="1"/>
<dbReference type="EMBL" id="CP000580">
    <property type="protein sequence ID" value="ABO01174.1"/>
    <property type="molecule type" value="Genomic_DNA"/>
</dbReference>
<dbReference type="SMR" id="A3Q7P6"/>
<dbReference type="KEGG" id="mjl:Mjls_5410"/>
<dbReference type="HOGENOM" id="CLU_023797_0_1_11"/>
<dbReference type="BioCyc" id="MSP164757:G1G8C-5469-MONOMER"/>
<dbReference type="UniPathway" id="UPA00906">
    <property type="reaction ID" value="UER00895"/>
</dbReference>
<dbReference type="GO" id="GO:0005737">
    <property type="term" value="C:cytoplasm"/>
    <property type="evidence" value="ECO:0007669"/>
    <property type="project" value="UniProtKB-SubCell"/>
</dbReference>
<dbReference type="GO" id="GO:0005524">
    <property type="term" value="F:ATP binding"/>
    <property type="evidence" value="ECO:0007669"/>
    <property type="project" value="UniProtKB-UniRule"/>
</dbReference>
<dbReference type="GO" id="GO:0004828">
    <property type="term" value="F:serine-tRNA ligase activity"/>
    <property type="evidence" value="ECO:0007669"/>
    <property type="project" value="UniProtKB-UniRule"/>
</dbReference>
<dbReference type="GO" id="GO:0016260">
    <property type="term" value="P:selenocysteine biosynthetic process"/>
    <property type="evidence" value="ECO:0007669"/>
    <property type="project" value="UniProtKB-UniRule"/>
</dbReference>
<dbReference type="GO" id="GO:0006434">
    <property type="term" value="P:seryl-tRNA aminoacylation"/>
    <property type="evidence" value="ECO:0007669"/>
    <property type="project" value="UniProtKB-UniRule"/>
</dbReference>
<dbReference type="CDD" id="cd00770">
    <property type="entry name" value="SerRS_core"/>
    <property type="match status" value="1"/>
</dbReference>
<dbReference type="FunFam" id="1.10.287.40:FF:000004">
    <property type="entry name" value="Serine--tRNA ligase"/>
    <property type="match status" value="1"/>
</dbReference>
<dbReference type="Gene3D" id="3.30.930.10">
    <property type="entry name" value="Bira Bifunctional Protein, Domain 2"/>
    <property type="match status" value="1"/>
</dbReference>
<dbReference type="Gene3D" id="1.10.287.40">
    <property type="entry name" value="Serine-tRNA synthetase, tRNA binding domain"/>
    <property type="match status" value="1"/>
</dbReference>
<dbReference type="HAMAP" id="MF_00176">
    <property type="entry name" value="Ser_tRNA_synth_type1"/>
    <property type="match status" value="1"/>
</dbReference>
<dbReference type="InterPro" id="IPR002314">
    <property type="entry name" value="aa-tRNA-synt_IIb"/>
</dbReference>
<dbReference type="InterPro" id="IPR006195">
    <property type="entry name" value="aa-tRNA-synth_II"/>
</dbReference>
<dbReference type="InterPro" id="IPR045864">
    <property type="entry name" value="aa-tRNA-synth_II/BPL/LPL"/>
</dbReference>
<dbReference type="InterPro" id="IPR002317">
    <property type="entry name" value="Ser-tRNA-ligase_type_1"/>
</dbReference>
<dbReference type="InterPro" id="IPR015866">
    <property type="entry name" value="Ser-tRNA-synth_1_N"/>
</dbReference>
<dbReference type="InterPro" id="IPR042103">
    <property type="entry name" value="SerRS_1_N_sf"/>
</dbReference>
<dbReference type="InterPro" id="IPR033729">
    <property type="entry name" value="SerRS_core"/>
</dbReference>
<dbReference type="InterPro" id="IPR010978">
    <property type="entry name" value="tRNA-bd_arm"/>
</dbReference>
<dbReference type="NCBIfam" id="TIGR00414">
    <property type="entry name" value="serS"/>
    <property type="match status" value="1"/>
</dbReference>
<dbReference type="PANTHER" id="PTHR11778">
    <property type="entry name" value="SERYL-TRNA SYNTHETASE"/>
    <property type="match status" value="1"/>
</dbReference>
<dbReference type="Pfam" id="PF02403">
    <property type="entry name" value="Seryl_tRNA_N"/>
    <property type="match status" value="1"/>
</dbReference>
<dbReference type="Pfam" id="PF00587">
    <property type="entry name" value="tRNA-synt_2b"/>
    <property type="match status" value="1"/>
</dbReference>
<dbReference type="PIRSF" id="PIRSF001529">
    <property type="entry name" value="Ser-tRNA-synth_IIa"/>
    <property type="match status" value="1"/>
</dbReference>
<dbReference type="PRINTS" id="PR00981">
    <property type="entry name" value="TRNASYNTHSER"/>
</dbReference>
<dbReference type="SUPFAM" id="SSF55681">
    <property type="entry name" value="Class II aaRS and biotin synthetases"/>
    <property type="match status" value="1"/>
</dbReference>
<dbReference type="SUPFAM" id="SSF46589">
    <property type="entry name" value="tRNA-binding arm"/>
    <property type="match status" value="1"/>
</dbReference>
<dbReference type="PROSITE" id="PS50862">
    <property type="entry name" value="AA_TRNA_LIGASE_II"/>
    <property type="match status" value="1"/>
</dbReference>
<accession>A3Q7P6</accession>
<reference key="1">
    <citation type="submission" date="2007-02" db="EMBL/GenBank/DDBJ databases">
        <title>Complete sequence of Mycobacterium sp. JLS.</title>
        <authorList>
            <consortium name="US DOE Joint Genome Institute"/>
            <person name="Copeland A."/>
            <person name="Lucas S."/>
            <person name="Lapidus A."/>
            <person name="Barry K."/>
            <person name="Detter J.C."/>
            <person name="Glavina del Rio T."/>
            <person name="Hammon N."/>
            <person name="Israni S."/>
            <person name="Dalin E."/>
            <person name="Tice H."/>
            <person name="Pitluck S."/>
            <person name="Chain P."/>
            <person name="Malfatti S."/>
            <person name="Shin M."/>
            <person name="Vergez L."/>
            <person name="Schmutz J."/>
            <person name="Larimer F."/>
            <person name="Land M."/>
            <person name="Hauser L."/>
            <person name="Kyrpides N."/>
            <person name="Mikhailova N."/>
            <person name="Miller C.D."/>
            <person name="Anderson A.J."/>
            <person name="Sims R.C."/>
            <person name="Richardson P."/>
        </authorList>
    </citation>
    <scope>NUCLEOTIDE SEQUENCE [LARGE SCALE GENOMIC DNA]</scope>
    <source>
        <strain>JLS</strain>
    </source>
</reference>
<comment type="function">
    <text evidence="1">Catalyzes the attachment of serine to tRNA(Ser). Is also able to aminoacylate tRNA(Sec) with serine, to form the misacylated tRNA L-seryl-tRNA(Sec), which will be further converted into selenocysteinyl-tRNA(Sec).</text>
</comment>
<comment type="catalytic activity">
    <reaction evidence="1">
        <text>tRNA(Ser) + L-serine + ATP = L-seryl-tRNA(Ser) + AMP + diphosphate + H(+)</text>
        <dbReference type="Rhea" id="RHEA:12292"/>
        <dbReference type="Rhea" id="RHEA-COMP:9669"/>
        <dbReference type="Rhea" id="RHEA-COMP:9703"/>
        <dbReference type="ChEBI" id="CHEBI:15378"/>
        <dbReference type="ChEBI" id="CHEBI:30616"/>
        <dbReference type="ChEBI" id="CHEBI:33019"/>
        <dbReference type="ChEBI" id="CHEBI:33384"/>
        <dbReference type="ChEBI" id="CHEBI:78442"/>
        <dbReference type="ChEBI" id="CHEBI:78533"/>
        <dbReference type="ChEBI" id="CHEBI:456215"/>
        <dbReference type="EC" id="6.1.1.11"/>
    </reaction>
</comment>
<comment type="catalytic activity">
    <reaction evidence="1">
        <text>tRNA(Sec) + L-serine + ATP = L-seryl-tRNA(Sec) + AMP + diphosphate + H(+)</text>
        <dbReference type="Rhea" id="RHEA:42580"/>
        <dbReference type="Rhea" id="RHEA-COMP:9742"/>
        <dbReference type="Rhea" id="RHEA-COMP:10128"/>
        <dbReference type="ChEBI" id="CHEBI:15378"/>
        <dbReference type="ChEBI" id="CHEBI:30616"/>
        <dbReference type="ChEBI" id="CHEBI:33019"/>
        <dbReference type="ChEBI" id="CHEBI:33384"/>
        <dbReference type="ChEBI" id="CHEBI:78442"/>
        <dbReference type="ChEBI" id="CHEBI:78533"/>
        <dbReference type="ChEBI" id="CHEBI:456215"/>
        <dbReference type="EC" id="6.1.1.11"/>
    </reaction>
</comment>
<comment type="pathway">
    <text evidence="1">Aminoacyl-tRNA biosynthesis; selenocysteinyl-tRNA(Sec) biosynthesis; L-seryl-tRNA(Sec) from L-serine and tRNA(Sec): step 1/1.</text>
</comment>
<comment type="subunit">
    <text evidence="1">Homodimer. The tRNA molecule binds across the dimer.</text>
</comment>
<comment type="subcellular location">
    <subcellularLocation>
        <location evidence="1">Cytoplasm</location>
    </subcellularLocation>
</comment>
<comment type="domain">
    <text evidence="1">Consists of two distinct domains, a catalytic core and a N-terminal extension that is involved in tRNA binding.</text>
</comment>
<comment type="similarity">
    <text evidence="1">Belongs to the class-II aminoacyl-tRNA synthetase family. Type-1 seryl-tRNA synthetase subfamily.</text>
</comment>
<evidence type="ECO:0000255" key="1">
    <source>
        <dbReference type="HAMAP-Rule" id="MF_00176"/>
    </source>
</evidence>
<keyword id="KW-0030">Aminoacyl-tRNA synthetase</keyword>
<keyword id="KW-0067">ATP-binding</keyword>
<keyword id="KW-0963">Cytoplasm</keyword>
<keyword id="KW-0436">Ligase</keyword>
<keyword id="KW-0547">Nucleotide-binding</keyword>
<keyword id="KW-0648">Protein biosynthesis</keyword>
<organism>
    <name type="scientific">Mycobacterium sp. (strain JLS)</name>
    <dbReference type="NCBI Taxonomy" id="164757"/>
    <lineage>
        <taxon>Bacteria</taxon>
        <taxon>Bacillati</taxon>
        <taxon>Actinomycetota</taxon>
        <taxon>Actinomycetes</taxon>
        <taxon>Mycobacteriales</taxon>
        <taxon>Mycobacteriaceae</taxon>
        <taxon>Mycobacterium</taxon>
    </lineage>
</organism>
<proteinExistence type="inferred from homology"/>
<sequence>MIDLKFLRENPDAVRASQRSRGEDPALVDALLDADAARRAAVSAADNLRAEQKAASKKVGKASPEERPALLTRAKELAEQVKAAEAAQADADRTFTAAHMAISNVVIEGVPAGGEDCFAVLDVVGEPRAIDDPKDHLELGEALGLIDMERGAKVAGSRFYFLTGRGALLQLGLMQLAVRLATDNGFTLVIPPVLVRPEVMAGTGFLGAHADEVYRLESDDMYLVGTSEVPLAGYHADEIIDLSAGPRRYAGWSSCFRREAGSYGKDTRGIIRVHQFDKVEGFIYCKPEDAAAEHDRLLGWQREMLALIEVPYRVIDVAAGDLGSSAARKYDCEAWVPTQQTYRELTSTSNCTTFQARRLSTRYRDENGKPQIAATLNGTLATTRWLVAILENHQQPDGSVRVPAALVPFVGTEVLEP</sequence>
<feature type="chain" id="PRO_1000019739" description="Serine--tRNA ligase">
    <location>
        <begin position="1"/>
        <end position="417"/>
    </location>
</feature>
<feature type="binding site" evidence="1">
    <location>
        <begin position="226"/>
        <end position="228"/>
    </location>
    <ligand>
        <name>L-serine</name>
        <dbReference type="ChEBI" id="CHEBI:33384"/>
    </ligand>
</feature>
<feature type="binding site" evidence="1">
    <location>
        <begin position="257"/>
        <end position="259"/>
    </location>
    <ligand>
        <name>ATP</name>
        <dbReference type="ChEBI" id="CHEBI:30616"/>
    </ligand>
</feature>
<feature type="binding site" evidence="1">
    <location>
        <position position="273"/>
    </location>
    <ligand>
        <name>ATP</name>
        <dbReference type="ChEBI" id="CHEBI:30616"/>
    </ligand>
</feature>
<feature type="binding site" evidence="1">
    <location>
        <position position="280"/>
    </location>
    <ligand>
        <name>L-serine</name>
        <dbReference type="ChEBI" id="CHEBI:33384"/>
    </ligand>
</feature>
<feature type="binding site" evidence="1">
    <location>
        <begin position="344"/>
        <end position="347"/>
    </location>
    <ligand>
        <name>ATP</name>
        <dbReference type="ChEBI" id="CHEBI:30616"/>
    </ligand>
</feature>
<feature type="binding site" evidence="1">
    <location>
        <position position="379"/>
    </location>
    <ligand>
        <name>L-serine</name>
        <dbReference type="ChEBI" id="CHEBI:33384"/>
    </ligand>
</feature>
<gene>
    <name evidence="1" type="primary">serS</name>
    <name type="ordered locus">Mjls_5410</name>
</gene>